<organism>
    <name type="scientific">Mus musculus</name>
    <name type="common">Mouse</name>
    <dbReference type="NCBI Taxonomy" id="10090"/>
    <lineage>
        <taxon>Eukaryota</taxon>
        <taxon>Metazoa</taxon>
        <taxon>Chordata</taxon>
        <taxon>Craniata</taxon>
        <taxon>Vertebrata</taxon>
        <taxon>Euteleostomi</taxon>
        <taxon>Mammalia</taxon>
        <taxon>Eutheria</taxon>
        <taxon>Euarchontoglires</taxon>
        <taxon>Glires</taxon>
        <taxon>Rodentia</taxon>
        <taxon>Myomorpha</taxon>
        <taxon>Muroidea</taxon>
        <taxon>Muridae</taxon>
        <taxon>Murinae</taxon>
        <taxon>Mus</taxon>
        <taxon>Mus</taxon>
    </lineage>
</organism>
<comment type="function">
    <text evidence="1 2 6">Acts as a receptor of the preprotein translocase complex of the outer mitochondrial membrane (TOM complex). Recognizes and mediates the translocation of mitochondrial preproteins from the cytosol into the mitochondria in a chaperone dependent manner (By similarity). Mediates TBK1 and IRF3 activation induced by MAVS in response to virus infection and promotes host antiviral responses during virus infection (PubMed:20628368).</text>
</comment>
<comment type="subunit">
    <text evidence="1 5">Forms part of the preprotein translocase complex of the outer mitochondrial membrane (TOM complex) which consists of at least 7 different proteins (TOMM5, TOMM6, TOMM7, TOMM20, TOMM22, TOMM40 and TOMM70) (By similarity). Interacts with CAPN8 (PubMed:16476741). Interacts with TRADD, TRAF6 and STING. Interacts with MAVS. Interacts with HSPA8 and HSP90AA1; both interactions are required for preprotein mitochondrial import. The interaction with HSP90AA1 is direct and mediates the association of TOMM70 with IRF3 and TBK1. Upon mitochondrial depolarization, interacts with PINK1; the interaction is required for PINK1-TOM-TIM23 supercomplex formation which is critical for PINK1 stabilization at the outer mitochondrial membrane, kinase activation and downstream mitophagy (By similarity).</text>
</comment>
<comment type="interaction">
    <interactant intactId="EBI-642469">
        <id>Q9CZW5</id>
    </interactant>
    <interactant intactId="EBI-645999">
        <id>Q8K443</id>
        <label>Rgs13</label>
    </interactant>
    <organismsDiffer>false</organismsDiffer>
    <experiments>12</experiments>
</comment>
<comment type="subcellular location">
    <subcellularLocation>
        <location evidence="1">Mitochondrion outer membrane</location>
        <topology evidence="3">Single-pass membrane protein</topology>
    </subcellularLocation>
</comment>
<comment type="tissue specificity">
    <text evidence="5">Expressed in the base region of the oxyntic and pyloric mucosae.</text>
</comment>
<comment type="similarity">
    <text evidence="7">Belongs to the Tom70 family.</text>
</comment>
<sequence length="611" mass="67590">MAASKPIEAAMAAAAAPGSGNGVGGGGGTAGPGSGAGTLPRWHVALAIGAPLLLGAGAMYLWSRRRRRREAGGRGDASGLKRNSERKTPEGRASPALGSGHHDGSGDSLEMSSLDRAQAAKNKGNKYFKAGKYEQAIQCYTEAISLCPTEKNVDLSTFYQNRAAAFEQLQKWKEVAQDCTKAVELNPKYVKALFRRAKAHEKLDNKKECLEDVTAVCILEGFQNEQSMLLADKVLKLLGKENAKEKYKNREPLMPSPQFIKSYFSSFTDDIISQPMLKGEKSDEDKDKEGEALEVKENSGYLKAKQYMEEENYDKIISECSKEIDAQGKYMAEALLLRATFYLLIGSANAAKPDLDKVISLKEANVKLRANALIKRGTMCMQQQQPMLSTQDFNMAAEIDPMNSDVYHHRGQLKILLDLVEEAVADFDACIRLRPKFALAQAQKCFALYRQAYTANNSSQVQAAMKGFEEIIKKFPRCAEGYALYAQALTDQQQFGKADEMYDKCIDLEPDNATTYVHKGLLQLQWKQDLDKGLELISKAIEIDNKCDFAYETMGTIEVQRGNMEKAIDMFNKAINLAKSEMEMAHLYSLCDAAHAQTEVAKKYGLKPPTL</sequence>
<proteinExistence type="evidence at protein level"/>
<protein>
    <recommendedName>
        <fullName evidence="7">Mitochondrial import receptor subunit TOM70</fullName>
    </recommendedName>
    <alternativeName>
        <fullName>Mitochondrial precursor proteins import receptor</fullName>
    </alternativeName>
    <alternativeName>
        <fullName>Translocase of outer membrane 70 kDa subunit</fullName>
    </alternativeName>
    <alternativeName>
        <fullName evidence="1">Translocase of outer mitochondrial membrane protein 70</fullName>
    </alternativeName>
</protein>
<accession>Q9CZW5</accession>
<accession>Q8BNI6</accession>
<feature type="initiator methionine" description="Removed" evidence="1">
    <location>
        <position position="1"/>
    </location>
</feature>
<feature type="chain" id="PRO_0000106337" description="Mitochondrial import receptor subunit TOM70">
    <location>
        <begin position="2"/>
        <end position="611"/>
    </location>
</feature>
<feature type="topological domain" description="Mitochondrial intermembrane" evidence="3">
    <location>
        <begin position="2"/>
        <end position="41"/>
    </location>
</feature>
<feature type="transmembrane region" description="Helical" evidence="3">
    <location>
        <begin position="42"/>
        <end position="62"/>
    </location>
</feature>
<feature type="topological domain" description="Cytoplasmic" evidence="3">
    <location>
        <begin position="63"/>
        <end position="611"/>
    </location>
</feature>
<feature type="repeat" description="TPR 1">
    <location>
        <begin position="117"/>
        <end position="150"/>
    </location>
</feature>
<feature type="repeat" description="TPR 2">
    <location>
        <begin position="156"/>
        <end position="189"/>
    </location>
</feature>
<feature type="repeat" description="TPR 3">
    <location>
        <begin position="297"/>
        <end position="330"/>
    </location>
</feature>
<feature type="repeat" description="TPR 4">
    <location>
        <begin position="332"/>
        <end position="365"/>
    </location>
</feature>
<feature type="repeat" description="TPR 5">
    <location>
        <begin position="370"/>
        <end position="403"/>
    </location>
</feature>
<feature type="repeat" description="TPR 6">
    <location>
        <begin position="404"/>
        <end position="437"/>
    </location>
</feature>
<feature type="repeat" description="TPR 7">
    <location>
        <begin position="445"/>
        <end position="478"/>
    </location>
</feature>
<feature type="repeat" description="TPR 8">
    <location>
        <begin position="479"/>
        <end position="512"/>
    </location>
</feature>
<feature type="repeat" description="TPR 9">
    <location>
        <begin position="514"/>
        <end position="547"/>
    </location>
</feature>
<feature type="repeat" description="TPR 10">
    <location>
        <begin position="548"/>
        <end position="581"/>
    </location>
</feature>
<feature type="region of interest" description="Disordered" evidence="4">
    <location>
        <begin position="69"/>
        <end position="110"/>
    </location>
</feature>
<feature type="modified residue" description="N-acetylalanine" evidence="1">
    <location>
        <position position="2"/>
    </location>
</feature>
<feature type="modified residue" description="Omega-N-methylarginine" evidence="1">
    <location>
        <position position="74"/>
    </location>
</feature>
<feature type="modified residue" description="Phosphoserine" evidence="9 10 11 12 13">
    <location>
        <position position="94"/>
    </location>
</feature>
<feature type="modified residue" description="Phosphoserine" evidence="13">
    <location>
        <position position="99"/>
    </location>
</feature>
<feature type="modified residue" description="Phosphoserine" evidence="2">
    <location>
        <position position="105"/>
    </location>
</feature>
<feature type="modified residue" description="Phosphoserine" evidence="13">
    <location>
        <position position="108"/>
    </location>
</feature>
<feature type="modified residue" description="Phosphoserine" evidence="1">
    <location>
        <position position="113"/>
    </location>
</feature>
<feature type="modified residue" description="N6-acetyllysine" evidence="1">
    <location>
        <position position="188"/>
    </location>
</feature>
<feature type="cross-link" description="Glycyl lysine isopeptide (Lys-Gly) (interchain with G-Cter in SUMO2)" evidence="1">
    <location>
        <position position="278"/>
    </location>
</feature>
<feature type="sequence conflict" description="In Ref. 1; BAB28018." evidence="7" ref="1">
    <original>R</original>
    <variation>S</variation>
    <location>
        <position position="116"/>
    </location>
</feature>
<reference key="1">
    <citation type="journal article" date="2005" name="Science">
        <title>The transcriptional landscape of the mammalian genome.</title>
        <authorList>
            <person name="Carninci P."/>
            <person name="Kasukawa T."/>
            <person name="Katayama S."/>
            <person name="Gough J."/>
            <person name="Frith M.C."/>
            <person name="Maeda N."/>
            <person name="Oyama R."/>
            <person name="Ravasi T."/>
            <person name="Lenhard B."/>
            <person name="Wells C."/>
            <person name="Kodzius R."/>
            <person name="Shimokawa K."/>
            <person name="Bajic V.B."/>
            <person name="Brenner S.E."/>
            <person name="Batalov S."/>
            <person name="Forrest A.R."/>
            <person name="Zavolan M."/>
            <person name="Davis M.J."/>
            <person name="Wilming L.G."/>
            <person name="Aidinis V."/>
            <person name="Allen J.E."/>
            <person name="Ambesi-Impiombato A."/>
            <person name="Apweiler R."/>
            <person name="Aturaliya R.N."/>
            <person name="Bailey T.L."/>
            <person name="Bansal M."/>
            <person name="Baxter L."/>
            <person name="Beisel K.W."/>
            <person name="Bersano T."/>
            <person name="Bono H."/>
            <person name="Chalk A.M."/>
            <person name="Chiu K.P."/>
            <person name="Choudhary V."/>
            <person name="Christoffels A."/>
            <person name="Clutterbuck D.R."/>
            <person name="Crowe M.L."/>
            <person name="Dalla E."/>
            <person name="Dalrymple B.P."/>
            <person name="de Bono B."/>
            <person name="Della Gatta G."/>
            <person name="di Bernardo D."/>
            <person name="Down T."/>
            <person name="Engstrom P."/>
            <person name="Fagiolini M."/>
            <person name="Faulkner G."/>
            <person name="Fletcher C.F."/>
            <person name="Fukushima T."/>
            <person name="Furuno M."/>
            <person name="Futaki S."/>
            <person name="Gariboldi M."/>
            <person name="Georgii-Hemming P."/>
            <person name="Gingeras T.R."/>
            <person name="Gojobori T."/>
            <person name="Green R.E."/>
            <person name="Gustincich S."/>
            <person name="Harbers M."/>
            <person name="Hayashi Y."/>
            <person name="Hensch T.K."/>
            <person name="Hirokawa N."/>
            <person name="Hill D."/>
            <person name="Huminiecki L."/>
            <person name="Iacono M."/>
            <person name="Ikeo K."/>
            <person name="Iwama A."/>
            <person name="Ishikawa T."/>
            <person name="Jakt M."/>
            <person name="Kanapin A."/>
            <person name="Katoh M."/>
            <person name="Kawasawa Y."/>
            <person name="Kelso J."/>
            <person name="Kitamura H."/>
            <person name="Kitano H."/>
            <person name="Kollias G."/>
            <person name="Krishnan S.P."/>
            <person name="Kruger A."/>
            <person name="Kummerfeld S.K."/>
            <person name="Kurochkin I.V."/>
            <person name="Lareau L.F."/>
            <person name="Lazarevic D."/>
            <person name="Lipovich L."/>
            <person name="Liu J."/>
            <person name="Liuni S."/>
            <person name="McWilliam S."/>
            <person name="Madan Babu M."/>
            <person name="Madera M."/>
            <person name="Marchionni L."/>
            <person name="Matsuda H."/>
            <person name="Matsuzawa S."/>
            <person name="Miki H."/>
            <person name="Mignone F."/>
            <person name="Miyake S."/>
            <person name="Morris K."/>
            <person name="Mottagui-Tabar S."/>
            <person name="Mulder N."/>
            <person name="Nakano N."/>
            <person name="Nakauchi H."/>
            <person name="Ng P."/>
            <person name="Nilsson R."/>
            <person name="Nishiguchi S."/>
            <person name="Nishikawa S."/>
            <person name="Nori F."/>
            <person name="Ohara O."/>
            <person name="Okazaki Y."/>
            <person name="Orlando V."/>
            <person name="Pang K.C."/>
            <person name="Pavan W.J."/>
            <person name="Pavesi G."/>
            <person name="Pesole G."/>
            <person name="Petrovsky N."/>
            <person name="Piazza S."/>
            <person name="Reed J."/>
            <person name="Reid J.F."/>
            <person name="Ring B.Z."/>
            <person name="Ringwald M."/>
            <person name="Rost B."/>
            <person name="Ruan Y."/>
            <person name="Salzberg S.L."/>
            <person name="Sandelin A."/>
            <person name="Schneider C."/>
            <person name="Schoenbach C."/>
            <person name="Sekiguchi K."/>
            <person name="Semple C.A."/>
            <person name="Seno S."/>
            <person name="Sessa L."/>
            <person name="Sheng Y."/>
            <person name="Shibata Y."/>
            <person name="Shimada H."/>
            <person name="Shimada K."/>
            <person name="Silva D."/>
            <person name="Sinclair B."/>
            <person name="Sperling S."/>
            <person name="Stupka E."/>
            <person name="Sugiura K."/>
            <person name="Sultana R."/>
            <person name="Takenaka Y."/>
            <person name="Taki K."/>
            <person name="Tammoja K."/>
            <person name="Tan S.L."/>
            <person name="Tang S."/>
            <person name="Taylor M.S."/>
            <person name="Tegner J."/>
            <person name="Teichmann S.A."/>
            <person name="Ueda H.R."/>
            <person name="van Nimwegen E."/>
            <person name="Verardo R."/>
            <person name="Wei C.L."/>
            <person name="Yagi K."/>
            <person name="Yamanishi H."/>
            <person name="Zabarovsky E."/>
            <person name="Zhu S."/>
            <person name="Zimmer A."/>
            <person name="Hide W."/>
            <person name="Bult C."/>
            <person name="Grimmond S.M."/>
            <person name="Teasdale R.D."/>
            <person name="Liu E.T."/>
            <person name="Brusic V."/>
            <person name="Quackenbush J."/>
            <person name="Wahlestedt C."/>
            <person name="Mattick J.S."/>
            <person name="Hume D.A."/>
            <person name="Kai C."/>
            <person name="Sasaki D."/>
            <person name="Tomaru Y."/>
            <person name="Fukuda S."/>
            <person name="Kanamori-Katayama M."/>
            <person name="Suzuki M."/>
            <person name="Aoki J."/>
            <person name="Arakawa T."/>
            <person name="Iida J."/>
            <person name="Imamura K."/>
            <person name="Itoh M."/>
            <person name="Kato T."/>
            <person name="Kawaji H."/>
            <person name="Kawagashira N."/>
            <person name="Kawashima T."/>
            <person name="Kojima M."/>
            <person name="Kondo S."/>
            <person name="Konno H."/>
            <person name="Nakano K."/>
            <person name="Ninomiya N."/>
            <person name="Nishio T."/>
            <person name="Okada M."/>
            <person name="Plessy C."/>
            <person name="Shibata K."/>
            <person name="Shiraki T."/>
            <person name="Suzuki S."/>
            <person name="Tagami M."/>
            <person name="Waki K."/>
            <person name="Watahiki A."/>
            <person name="Okamura-Oho Y."/>
            <person name="Suzuki H."/>
            <person name="Kawai J."/>
            <person name="Hayashizaki Y."/>
        </authorList>
    </citation>
    <scope>NUCLEOTIDE SEQUENCE [LARGE SCALE MRNA]</scope>
    <source>
        <strain>C57BL/6J</strain>
        <tissue>Bone marrow</tissue>
        <tissue>Embryo</tissue>
    </source>
</reference>
<reference key="2">
    <citation type="journal article" date="2004" name="Genome Res.">
        <title>The status, quality, and expansion of the NIH full-length cDNA project: the Mammalian Gene Collection (MGC).</title>
        <authorList>
            <consortium name="The MGC Project Team"/>
        </authorList>
    </citation>
    <scope>NUCLEOTIDE SEQUENCE [LARGE SCALE MRNA]</scope>
    <source>
        <strain>C57BL/6J</strain>
        <tissue>Brain</tissue>
    </source>
</reference>
<reference key="3">
    <citation type="submission" date="2007-04" db="UniProtKB">
        <authorList>
            <person name="Lubec G."/>
            <person name="Kang S.U."/>
        </authorList>
    </citation>
    <scope>PROTEIN SEQUENCE OF 163-171; 330-357; 451-466 AND 520-527</scope>
    <scope>IDENTIFICATION BY MASS SPECTROMETRY</scope>
    <source>
        <strain>C57BL/6J</strain>
        <tissue>Brain</tissue>
    </source>
</reference>
<reference key="4">
    <citation type="journal article" date="2006" name="J. Biol. Chem.">
        <title>Stomach-specific calpain, nCL-2, localizes in mucus cells and proteolyzes the beta-subunit of coatomer complex, beta-COP.</title>
        <authorList>
            <person name="Hata S."/>
            <person name="Koyama S."/>
            <person name="Kawahara H."/>
            <person name="Doi N."/>
            <person name="Maeda T."/>
            <person name="Toyama-Sorimachi N."/>
            <person name="Abe K."/>
            <person name="Suzuki K."/>
            <person name="Sorimachi H."/>
        </authorList>
    </citation>
    <scope>INTERACTION WITH CAPN8</scope>
    <scope>TISSUE SPECIFICITY</scope>
</reference>
<reference key="5">
    <citation type="journal article" date="2007" name="Mol. Cell. Proteomics">
        <title>Mitochondrial phosphoproteome revealed by an improved IMAC method and MS/MS/MS.</title>
        <authorList>
            <person name="Lee J."/>
            <person name="Xu Y."/>
            <person name="Chen Y."/>
            <person name="Sprung R."/>
            <person name="Kim S.C."/>
            <person name="Xie S."/>
            <person name="Zhao Y."/>
        </authorList>
    </citation>
    <scope>PHOSPHORYLATION [LARGE SCALE ANALYSIS] AT SER-94</scope>
    <scope>IDENTIFICATION BY MASS SPECTROMETRY [LARGE SCALE ANALYSIS]</scope>
    <source>
        <tissue>Liver</tissue>
    </source>
</reference>
<reference key="6">
    <citation type="journal article" date="2008" name="J. Proteome Res.">
        <title>Specific phosphopeptide enrichment with immobilized titanium ion affinity chromatography adsorbent for phosphoproteome analysis.</title>
        <authorList>
            <person name="Zhou H."/>
            <person name="Ye M."/>
            <person name="Dong J."/>
            <person name="Han G."/>
            <person name="Jiang X."/>
            <person name="Wu R."/>
            <person name="Zou H."/>
        </authorList>
    </citation>
    <scope>PHOSPHORYLATION [LARGE SCALE ANALYSIS] AT SER-94</scope>
    <scope>IDENTIFICATION BY MASS SPECTROMETRY [LARGE SCALE ANALYSIS]</scope>
    <source>
        <tissue>Liver</tissue>
    </source>
</reference>
<reference key="7">
    <citation type="journal article" date="2009" name="Immunity">
        <title>The phagosomal proteome in interferon-gamma-activated macrophages.</title>
        <authorList>
            <person name="Trost M."/>
            <person name="English L."/>
            <person name="Lemieux S."/>
            <person name="Courcelles M."/>
            <person name="Desjardins M."/>
            <person name="Thibault P."/>
        </authorList>
    </citation>
    <scope>PHOSPHORYLATION [LARGE SCALE ANALYSIS] AT SER-94</scope>
    <scope>IDENTIFICATION BY MASS SPECTROMETRY [LARGE SCALE ANALYSIS]</scope>
</reference>
<reference key="8">
    <citation type="journal article" date="2009" name="Mol. Cell. Proteomics">
        <title>Large scale localization of protein phosphorylation by use of electron capture dissociation mass spectrometry.</title>
        <authorList>
            <person name="Sweet S.M."/>
            <person name="Bailey C.M."/>
            <person name="Cunningham D.L."/>
            <person name="Heath J.K."/>
            <person name="Cooper H.J."/>
        </authorList>
    </citation>
    <scope>PHOSPHORYLATION [LARGE SCALE ANALYSIS] AT SER-94</scope>
    <scope>IDENTIFICATION BY MASS SPECTROMETRY [LARGE SCALE ANALYSIS]</scope>
    <source>
        <tissue>Embryonic fibroblast</tissue>
    </source>
</reference>
<reference key="9">
    <citation type="journal article" date="2010" name="Cell">
        <title>A tissue-specific atlas of mouse protein phosphorylation and expression.</title>
        <authorList>
            <person name="Huttlin E.L."/>
            <person name="Jedrychowski M.P."/>
            <person name="Elias J.E."/>
            <person name="Goswami T."/>
            <person name="Rad R."/>
            <person name="Beausoleil S.A."/>
            <person name="Villen J."/>
            <person name="Haas W."/>
            <person name="Sowa M.E."/>
            <person name="Gygi S.P."/>
        </authorList>
    </citation>
    <scope>PHOSPHORYLATION [LARGE SCALE ANALYSIS] AT SER-94; SER-99 AND SER-108</scope>
    <scope>IDENTIFICATION BY MASS SPECTROMETRY [LARGE SCALE ANALYSIS]</scope>
    <source>
        <tissue>Brain</tissue>
        <tissue>Brown adipose tissue</tissue>
        <tissue>Heart</tissue>
        <tissue>Kidney</tissue>
        <tissue>Liver</tissue>
        <tissue>Lung</tissue>
        <tissue>Pancreas</tissue>
        <tissue>Spleen</tissue>
        <tissue>Testis</tissue>
    </source>
</reference>
<reference key="10">
    <citation type="journal article" date="2010" name="Cell Res.">
        <title>Tom70 mediates activation of interferon regulatory factor 3 on mitochondria.</title>
        <authorList>
            <person name="Liu X.Y."/>
            <person name="Wei B."/>
            <person name="Shi H.X."/>
            <person name="Shan Y.F."/>
            <person name="Wang C."/>
        </authorList>
    </citation>
    <scope>FUNCTION</scope>
</reference>
<dbReference type="EMBL" id="AK012084">
    <property type="protein sequence ID" value="BAB28018.1"/>
    <property type="molecule type" value="mRNA"/>
</dbReference>
<dbReference type="EMBL" id="AK083586">
    <property type="protein sequence ID" value="BAC38960.1"/>
    <property type="molecule type" value="mRNA"/>
</dbReference>
<dbReference type="EMBL" id="AK145458">
    <property type="protein sequence ID" value="BAE26448.1"/>
    <property type="molecule type" value="mRNA"/>
</dbReference>
<dbReference type="EMBL" id="AK150429">
    <property type="protein sequence ID" value="BAE29552.1"/>
    <property type="molecule type" value="mRNA"/>
</dbReference>
<dbReference type="EMBL" id="BC057096">
    <property type="protein sequence ID" value="AAH57096.1"/>
    <property type="molecule type" value="mRNA"/>
</dbReference>
<dbReference type="EMBL" id="BC139420">
    <property type="protein sequence ID" value="AAI39421.1"/>
    <property type="molecule type" value="mRNA"/>
</dbReference>
<dbReference type="EMBL" id="BC139421">
    <property type="protein sequence ID" value="AAI39422.1"/>
    <property type="molecule type" value="mRNA"/>
</dbReference>
<dbReference type="CCDS" id="CCDS28227.1"/>
<dbReference type="RefSeq" id="NP_613065.2">
    <property type="nucleotide sequence ID" value="NM_138599.5"/>
</dbReference>
<dbReference type="SMR" id="Q9CZW5"/>
<dbReference type="BioGRID" id="205817">
    <property type="interactions" value="26"/>
</dbReference>
<dbReference type="FunCoup" id="Q9CZW5">
    <property type="interactions" value="2927"/>
</dbReference>
<dbReference type="IntAct" id="Q9CZW5">
    <property type="interactions" value="3"/>
</dbReference>
<dbReference type="MINT" id="Q9CZW5"/>
<dbReference type="STRING" id="10090.ENSMUSP00000129186"/>
<dbReference type="GlyGen" id="Q9CZW5">
    <property type="glycosylation" value="3 sites, 1 N-linked glycan (1 site), 1 O-linked glycan (2 sites)"/>
</dbReference>
<dbReference type="iPTMnet" id="Q9CZW5"/>
<dbReference type="MetOSite" id="Q9CZW5"/>
<dbReference type="PhosphoSitePlus" id="Q9CZW5"/>
<dbReference type="SwissPalm" id="Q9CZW5"/>
<dbReference type="jPOST" id="Q9CZW5"/>
<dbReference type="PaxDb" id="10090-ENSMUSP00000129186"/>
<dbReference type="ProteomicsDB" id="260651"/>
<dbReference type="Pumba" id="Q9CZW5"/>
<dbReference type="Antibodypedia" id="3025">
    <property type="antibodies" value="233 antibodies from 30 providers"/>
</dbReference>
<dbReference type="DNASU" id="28185"/>
<dbReference type="Ensembl" id="ENSMUST00000166897.3">
    <property type="protein sequence ID" value="ENSMUSP00000129186.2"/>
    <property type="gene ID" value="ENSMUSG00000022752.10"/>
</dbReference>
<dbReference type="GeneID" id="28185"/>
<dbReference type="KEGG" id="mmu:28185"/>
<dbReference type="UCSC" id="uc007zmz.1">
    <property type="organism name" value="mouse"/>
</dbReference>
<dbReference type="AGR" id="MGI:106295"/>
<dbReference type="CTD" id="28185"/>
<dbReference type="MGI" id="MGI:106295">
    <property type="gene designation" value="Tomm70a"/>
</dbReference>
<dbReference type="VEuPathDB" id="HostDB:ENSMUSG00000022752"/>
<dbReference type="eggNOG" id="KOG0547">
    <property type="taxonomic scope" value="Eukaryota"/>
</dbReference>
<dbReference type="GeneTree" id="ENSGT00940000157095"/>
<dbReference type="HOGENOM" id="CLU_017516_2_0_1"/>
<dbReference type="InParanoid" id="Q9CZW5"/>
<dbReference type="OMA" id="QWRGDIE"/>
<dbReference type="OrthoDB" id="66418at2759"/>
<dbReference type="PhylomeDB" id="Q9CZW5"/>
<dbReference type="TreeFam" id="TF106203"/>
<dbReference type="Reactome" id="R-MMU-168928">
    <property type="pathway name" value="DDX58/IFIH1-mediated induction of interferon-alpha/beta"/>
</dbReference>
<dbReference type="Reactome" id="R-MMU-5205685">
    <property type="pathway name" value="PINK1-PRKN Mediated Mitophagy"/>
</dbReference>
<dbReference type="Reactome" id="R-MMU-5689880">
    <property type="pathway name" value="Ub-specific processing proteases"/>
</dbReference>
<dbReference type="BioGRID-ORCS" id="28185">
    <property type="hits" value="27 hits in 77 CRISPR screens"/>
</dbReference>
<dbReference type="CD-CODE" id="CE726F99">
    <property type="entry name" value="Postsynaptic density"/>
</dbReference>
<dbReference type="ChiTaRS" id="Tomm70a">
    <property type="organism name" value="mouse"/>
</dbReference>
<dbReference type="PRO" id="PR:Q9CZW5"/>
<dbReference type="Proteomes" id="UP000000589">
    <property type="component" value="Chromosome 16"/>
</dbReference>
<dbReference type="RNAct" id="Q9CZW5">
    <property type="molecule type" value="protein"/>
</dbReference>
<dbReference type="Bgee" id="ENSMUSG00000022752">
    <property type="expression patterns" value="Expressed in caudate-putamen and 272 other cell types or tissues"/>
</dbReference>
<dbReference type="GO" id="GO:0005741">
    <property type="term" value="C:mitochondrial outer membrane"/>
    <property type="evidence" value="ECO:0007669"/>
    <property type="project" value="UniProtKB-SubCell"/>
</dbReference>
<dbReference type="GO" id="GO:0005739">
    <property type="term" value="C:mitochondrion"/>
    <property type="evidence" value="ECO:0000314"/>
    <property type="project" value="MGI"/>
</dbReference>
<dbReference type="GO" id="GO:0060090">
    <property type="term" value="F:molecular adaptor activity"/>
    <property type="evidence" value="ECO:0007669"/>
    <property type="project" value="Ensembl"/>
</dbReference>
<dbReference type="GO" id="GO:0002218">
    <property type="term" value="P:activation of innate immune response"/>
    <property type="evidence" value="ECO:0000250"/>
    <property type="project" value="UniProtKB"/>
</dbReference>
<dbReference type="GO" id="GO:0098586">
    <property type="term" value="P:cellular response to virus"/>
    <property type="evidence" value="ECO:0000250"/>
    <property type="project" value="UniProtKB"/>
</dbReference>
<dbReference type="GO" id="GO:0061052">
    <property type="term" value="P:negative regulation of cell growth involved in cardiac muscle cell development"/>
    <property type="evidence" value="ECO:0007669"/>
    <property type="project" value="Ensembl"/>
</dbReference>
<dbReference type="GO" id="GO:0002230">
    <property type="term" value="P:positive regulation of defense response to virus by host"/>
    <property type="evidence" value="ECO:0000250"/>
    <property type="project" value="UniProtKB"/>
</dbReference>
<dbReference type="GO" id="GO:0032728">
    <property type="term" value="P:positive regulation of interferon-beta production"/>
    <property type="evidence" value="ECO:0000250"/>
    <property type="project" value="UniProtKB"/>
</dbReference>
<dbReference type="GO" id="GO:1903955">
    <property type="term" value="P:positive regulation of protein targeting to mitochondrion"/>
    <property type="evidence" value="ECO:0007669"/>
    <property type="project" value="Ensembl"/>
</dbReference>
<dbReference type="GO" id="GO:0006626">
    <property type="term" value="P:protein targeting to mitochondrion"/>
    <property type="evidence" value="ECO:0007669"/>
    <property type="project" value="Ensembl"/>
</dbReference>
<dbReference type="GO" id="GO:0042981">
    <property type="term" value="P:regulation of apoptotic process"/>
    <property type="evidence" value="ECO:0000250"/>
    <property type="project" value="UniProtKB"/>
</dbReference>
<dbReference type="GO" id="GO:0097068">
    <property type="term" value="P:response to thyroxine"/>
    <property type="evidence" value="ECO:0007669"/>
    <property type="project" value="Ensembl"/>
</dbReference>
<dbReference type="FunFam" id="1.25.40.10:FF:000141">
    <property type="entry name" value="Mitochondrial import receptor subunit TOM70"/>
    <property type="match status" value="1"/>
</dbReference>
<dbReference type="FunFam" id="1.25.40.10:FF:000071">
    <property type="entry name" value="Putative mitochondrial import receptor subunit TOM70"/>
    <property type="match status" value="1"/>
</dbReference>
<dbReference type="Gene3D" id="1.25.40.10">
    <property type="entry name" value="Tetratricopeptide repeat domain"/>
    <property type="match status" value="2"/>
</dbReference>
<dbReference type="InterPro" id="IPR011990">
    <property type="entry name" value="TPR-like_helical_dom_sf"/>
</dbReference>
<dbReference type="InterPro" id="IPR019734">
    <property type="entry name" value="TPR_rpt"/>
</dbReference>
<dbReference type="PANTHER" id="PTHR46208">
    <property type="entry name" value="MITOCHONDRIAL IMPORT RECEPTOR SUBUNIT TOM70"/>
    <property type="match status" value="1"/>
</dbReference>
<dbReference type="PANTHER" id="PTHR46208:SF1">
    <property type="entry name" value="MITOCHONDRIAL IMPORT RECEPTOR SUBUNIT TOM70"/>
    <property type="match status" value="1"/>
</dbReference>
<dbReference type="Pfam" id="PF00515">
    <property type="entry name" value="TPR_1"/>
    <property type="match status" value="1"/>
</dbReference>
<dbReference type="Pfam" id="PF13174">
    <property type="entry name" value="TPR_6"/>
    <property type="match status" value="1"/>
</dbReference>
<dbReference type="Pfam" id="PF13181">
    <property type="entry name" value="TPR_8"/>
    <property type="match status" value="3"/>
</dbReference>
<dbReference type="SMART" id="SM00028">
    <property type="entry name" value="TPR"/>
    <property type="match status" value="10"/>
</dbReference>
<dbReference type="SUPFAM" id="SSF48439">
    <property type="entry name" value="Protein prenylyltransferase"/>
    <property type="match status" value="1"/>
</dbReference>
<dbReference type="SUPFAM" id="SSF48452">
    <property type="entry name" value="TPR-like"/>
    <property type="match status" value="1"/>
</dbReference>
<dbReference type="PROSITE" id="PS50005">
    <property type="entry name" value="TPR"/>
    <property type="match status" value="7"/>
</dbReference>
<dbReference type="PROSITE" id="PS50293">
    <property type="entry name" value="TPR_REGION"/>
    <property type="match status" value="1"/>
</dbReference>
<gene>
    <name evidence="8" type="primary">Tomm70</name>
    <name type="synonym">D16Wsu109e</name>
    <name type="synonym">Tomm70a</name>
</gene>
<evidence type="ECO:0000250" key="1">
    <source>
        <dbReference type="UniProtKB" id="O94826"/>
    </source>
</evidence>
<evidence type="ECO:0000250" key="2">
    <source>
        <dbReference type="UniProtKB" id="Q75Q39"/>
    </source>
</evidence>
<evidence type="ECO:0000255" key="3"/>
<evidence type="ECO:0000256" key="4">
    <source>
        <dbReference type="SAM" id="MobiDB-lite"/>
    </source>
</evidence>
<evidence type="ECO:0000269" key="5">
    <source>
    </source>
</evidence>
<evidence type="ECO:0000269" key="6">
    <source>
    </source>
</evidence>
<evidence type="ECO:0000305" key="7"/>
<evidence type="ECO:0000312" key="8">
    <source>
        <dbReference type="MGI" id="MGI:106295"/>
    </source>
</evidence>
<evidence type="ECO:0007744" key="9">
    <source>
    </source>
</evidence>
<evidence type="ECO:0007744" key="10">
    <source>
    </source>
</evidence>
<evidence type="ECO:0007744" key="11">
    <source>
    </source>
</evidence>
<evidence type="ECO:0007744" key="12">
    <source>
    </source>
</evidence>
<evidence type="ECO:0007744" key="13">
    <source>
    </source>
</evidence>
<name>TOM70_MOUSE</name>
<keyword id="KW-0007">Acetylation</keyword>
<keyword id="KW-0903">Direct protein sequencing</keyword>
<keyword id="KW-1017">Isopeptide bond</keyword>
<keyword id="KW-0472">Membrane</keyword>
<keyword id="KW-0488">Methylation</keyword>
<keyword id="KW-0496">Mitochondrion</keyword>
<keyword id="KW-1000">Mitochondrion outer membrane</keyword>
<keyword id="KW-0597">Phosphoprotein</keyword>
<keyword id="KW-1185">Reference proteome</keyword>
<keyword id="KW-0677">Repeat</keyword>
<keyword id="KW-0802">TPR repeat</keyword>
<keyword id="KW-0812">Transmembrane</keyword>
<keyword id="KW-1133">Transmembrane helix</keyword>
<keyword id="KW-0832">Ubl conjugation</keyword>